<organism>
    <name type="scientific">Rattus norvegicus</name>
    <name type="common">Rat</name>
    <dbReference type="NCBI Taxonomy" id="10116"/>
    <lineage>
        <taxon>Eukaryota</taxon>
        <taxon>Metazoa</taxon>
        <taxon>Chordata</taxon>
        <taxon>Craniata</taxon>
        <taxon>Vertebrata</taxon>
        <taxon>Euteleostomi</taxon>
        <taxon>Mammalia</taxon>
        <taxon>Eutheria</taxon>
        <taxon>Euarchontoglires</taxon>
        <taxon>Glires</taxon>
        <taxon>Rodentia</taxon>
        <taxon>Myomorpha</taxon>
        <taxon>Muroidea</taxon>
        <taxon>Muridae</taxon>
        <taxon>Murinae</taxon>
        <taxon>Rattus</taxon>
    </lineage>
</organism>
<dbReference type="EC" id="3.4.19.5" evidence="4"/>
<dbReference type="EC" id="3.5.1.1" evidence="4"/>
<dbReference type="EMBL" id="AF329099">
    <property type="protein sequence ID" value="AAL41029.1"/>
    <property type="molecule type" value="mRNA"/>
</dbReference>
<dbReference type="EMBL" id="AJ427914">
    <property type="protein sequence ID" value="CAD20833.1"/>
    <property type="molecule type" value="mRNA"/>
</dbReference>
<dbReference type="EMBL" id="AJ427915">
    <property type="protein sequence ID" value="CAD20834.1"/>
    <property type="molecule type" value="mRNA"/>
</dbReference>
<dbReference type="RefSeq" id="NP_659557.1">
    <property type="nucleotide sequence ID" value="NM_145089.4"/>
</dbReference>
<dbReference type="SMR" id="Q8VI04"/>
<dbReference type="BioGRID" id="251586">
    <property type="interactions" value="2"/>
</dbReference>
<dbReference type="FunCoup" id="Q8VI04">
    <property type="interactions" value="330"/>
</dbReference>
<dbReference type="IntAct" id="Q8VI04">
    <property type="interactions" value="2"/>
</dbReference>
<dbReference type="STRING" id="10116.ENSRNOP00000027459"/>
<dbReference type="iPTMnet" id="Q8VI04"/>
<dbReference type="PhosphoSitePlus" id="Q8VI04"/>
<dbReference type="SwissPalm" id="Q8VI04"/>
<dbReference type="jPOST" id="Q8VI04"/>
<dbReference type="PaxDb" id="10116-ENSRNOP00000027459"/>
<dbReference type="GeneID" id="246307"/>
<dbReference type="KEGG" id="rno:246307"/>
<dbReference type="UCSC" id="RGD:708526">
    <property type="organism name" value="rat"/>
</dbReference>
<dbReference type="AGR" id="RGD:708526"/>
<dbReference type="CTD" id="80150"/>
<dbReference type="RGD" id="708526">
    <property type="gene designation" value="Asrgl1"/>
</dbReference>
<dbReference type="VEuPathDB" id="HostDB:ENSRNOG00000020202"/>
<dbReference type="eggNOG" id="KOG1592">
    <property type="taxonomic scope" value="Eukaryota"/>
</dbReference>
<dbReference type="HOGENOM" id="CLU_021603_1_2_1"/>
<dbReference type="InParanoid" id="Q8VI04"/>
<dbReference type="OrthoDB" id="2262349at2759"/>
<dbReference type="PhylomeDB" id="Q8VI04"/>
<dbReference type="TreeFam" id="TF323960"/>
<dbReference type="Reactome" id="R-RNO-8964208">
    <property type="pathway name" value="Phenylalanine metabolism"/>
</dbReference>
<dbReference type="SABIO-RK" id="Q8VI04"/>
<dbReference type="PRO" id="PR:Q8VI04"/>
<dbReference type="Proteomes" id="UP000002494">
    <property type="component" value="Chromosome 1"/>
</dbReference>
<dbReference type="Bgee" id="ENSRNOG00000020202">
    <property type="expression patterns" value="Expressed in testis and 19 other cell types or tissues"/>
</dbReference>
<dbReference type="GO" id="GO:0005737">
    <property type="term" value="C:cytoplasm"/>
    <property type="evidence" value="ECO:0000314"/>
    <property type="project" value="MGI"/>
</dbReference>
<dbReference type="GO" id="GO:0001917">
    <property type="term" value="C:photoreceptor inner segment"/>
    <property type="evidence" value="ECO:0000250"/>
    <property type="project" value="UniProtKB"/>
</dbReference>
<dbReference type="GO" id="GO:0004067">
    <property type="term" value="F:asparaginase activity"/>
    <property type="evidence" value="ECO:0000314"/>
    <property type="project" value="MGI"/>
</dbReference>
<dbReference type="GO" id="GO:0008798">
    <property type="term" value="F:beta-aspartyl-peptidase activity"/>
    <property type="evidence" value="ECO:0000250"/>
    <property type="project" value="UniProtKB"/>
</dbReference>
<dbReference type="GO" id="GO:0033345">
    <property type="term" value="P:asparagine catabolic process via L-aspartate"/>
    <property type="evidence" value="ECO:0000314"/>
    <property type="project" value="UniProtKB"/>
</dbReference>
<dbReference type="GO" id="GO:0006508">
    <property type="term" value="P:proteolysis"/>
    <property type="evidence" value="ECO:0007669"/>
    <property type="project" value="UniProtKB-KW"/>
</dbReference>
<dbReference type="CDD" id="cd04702">
    <property type="entry name" value="ASRGL1_like"/>
    <property type="match status" value="1"/>
</dbReference>
<dbReference type="FunFam" id="3.60.20.30:FF:000001">
    <property type="entry name" value="Isoaspartyl peptidase/L-asparaginase"/>
    <property type="match status" value="1"/>
</dbReference>
<dbReference type="Gene3D" id="3.60.20.30">
    <property type="entry name" value="(Glycosyl)asparaginase"/>
    <property type="match status" value="1"/>
</dbReference>
<dbReference type="InterPro" id="IPR033844">
    <property type="entry name" value="ASRGL1_meta"/>
</dbReference>
<dbReference type="InterPro" id="IPR029055">
    <property type="entry name" value="Ntn_hydrolases_N"/>
</dbReference>
<dbReference type="InterPro" id="IPR000246">
    <property type="entry name" value="Peptidase_T2"/>
</dbReference>
<dbReference type="PANTHER" id="PTHR10188:SF41">
    <property type="entry name" value="ISOASPARTYL PEPTIDASE_L-ASPARAGINASE"/>
    <property type="match status" value="1"/>
</dbReference>
<dbReference type="PANTHER" id="PTHR10188">
    <property type="entry name" value="L-ASPARAGINASE"/>
    <property type="match status" value="1"/>
</dbReference>
<dbReference type="Pfam" id="PF01112">
    <property type="entry name" value="Asparaginase_2"/>
    <property type="match status" value="1"/>
</dbReference>
<dbReference type="SUPFAM" id="SSF56235">
    <property type="entry name" value="N-terminal nucleophile aminohydrolases (Ntn hydrolases)"/>
    <property type="match status" value="1"/>
</dbReference>
<proteinExistence type="evidence at protein level"/>
<gene>
    <name type="primary">Asrgl1</name>
    <name type="synonym">Alp</name>
    <name type="synonym">Gliap</name>
    <name type="synonym">Hiob</name>
</gene>
<evidence type="ECO:0000250" key="1"/>
<evidence type="ECO:0000250" key="2">
    <source>
        <dbReference type="UniProtKB" id="Q7L266"/>
    </source>
</evidence>
<evidence type="ECO:0000269" key="3">
    <source>
    </source>
</evidence>
<evidence type="ECO:0000269" key="4">
    <source>
    </source>
</evidence>
<evidence type="ECO:0000305" key="5"/>
<feature type="chain" id="PRO_0000420561" description="Isoaspartyl peptidase/L-asparaginase alpha chain">
    <location>
        <begin position="1"/>
        <end position="190"/>
    </location>
</feature>
<feature type="chain" id="PRO_0000420562" description="Isoaspartyl peptidase/L-asparaginase beta chain">
    <location>
        <begin position="191"/>
        <end position="333"/>
    </location>
</feature>
<feature type="active site" description="Nucleophile" evidence="1">
    <location>
        <position position="191"/>
    </location>
</feature>
<feature type="binding site" evidence="1">
    <location>
        <begin position="219"/>
        <end position="222"/>
    </location>
    <ligand>
        <name>substrate</name>
    </ligand>
</feature>
<feature type="binding site" evidence="1">
    <location>
        <begin position="242"/>
        <end position="245"/>
    </location>
    <ligand>
        <name>substrate</name>
    </ligand>
</feature>
<comment type="function">
    <text evidence="2 4">Has both L-asparaginase and beta-aspartyl peptidase activity. Is highly active with L-Asp beta-methyl ester. Besides, has catalytic activity toward beta-aspartyl dipeptides and their methyl esters, including beta-L-Asp-L-Phe, beta-L-Asp-L-Phe methyl ester (aspartame), beta-L-Asp-L-Ala, beta-L-Asp-L-Leu and beta-L-Asp-L-Lys. Does not have aspartylglucosaminidase activity and is inactive toward GlcNAc-L-Asn. Likewise, has no activity toward glutamine (By similarity). May be involved in the production of L-aspartate, which can act as an excitatory neurotransmitter in some brain regions.</text>
</comment>
<comment type="catalytic activity">
    <reaction evidence="4">
        <text>L-asparagine + H2O = L-aspartate + NH4(+)</text>
        <dbReference type="Rhea" id="RHEA:21016"/>
        <dbReference type="ChEBI" id="CHEBI:15377"/>
        <dbReference type="ChEBI" id="CHEBI:28938"/>
        <dbReference type="ChEBI" id="CHEBI:29991"/>
        <dbReference type="ChEBI" id="CHEBI:58048"/>
        <dbReference type="EC" id="3.5.1.1"/>
    </reaction>
</comment>
<comment type="catalytic activity">
    <reaction evidence="4">
        <text>Cleavage of a beta-linked Asp residue from the N-terminus of a polypeptide.</text>
        <dbReference type="EC" id="3.4.19.5"/>
    </reaction>
</comment>
<comment type="biophysicochemical properties">
    <kinetics>
        <KM evidence="4">2.4 mM for L-aspartic acid beta-(7-amido-4-methylcoumarin)</KM>
    </kinetics>
</comment>
<comment type="subunit">
    <text evidence="1">Heterodimer of an alpha and beta chain produced by autocleavage. This heterodimer may then dimerize in turn, giving rise to a heterotetramer (By similarity).</text>
</comment>
<comment type="subcellular location">
    <subcellularLocation>
        <location evidence="3 4">Cytoplasm</location>
    </subcellularLocation>
    <text>Midpiece of sperm tail.</text>
</comment>
<comment type="tissue specificity">
    <text evidence="3 4">Present in testis, brain, liver, kidney, heart and skeletal muscle. In brain, specifically present in the astrocytic lineage. Present in sperm (at protein level).</text>
</comment>
<comment type="PTM">
    <text evidence="2">Cleaved into an alpha and beta chain by autocatalysis; this activates the enzyme. The N-terminal residue of the beta subunit is responsible for the nucleophile hydrolase activity.</text>
</comment>
<comment type="miscellaneous">
    <text>In vasectomized rats, autoantibodies against Asrgl1 are present.</text>
</comment>
<comment type="similarity">
    <text evidence="5">Belongs to the Ntn-hydrolase family.</text>
</comment>
<sequence length="333" mass="34410">MATARPSSCGRDSVPATPRASIDVSLVVVVHGGGASNISPGRKELVSEGIAKAATEGYNILKAGGSAVDAVEGAVTMLENDPEFNAGYGSVLNADGDIEMDASIMDGKDLSAGAVSAVRCIANPVKLARLVMEKTPHCFLTGRGAEKFAADMGIPQTPAEKLITERTKKHLEKEKLEKGAQKADCPKNSGTVGAVALDCKGNLAYATSTGGIVNKMVGRVGDSPCIGAGGYADNNLGAVSTTGHGESILKVNLARLALFHVEQGKTVDEAATLALDYMKSKLKGLGGLILINKTGDWVAKWTSASMPWAAVKNGKLQAGIDLCETKTRNLPTC</sequence>
<reference key="1">
    <citation type="journal article" date="2002" name="Mol. Reprod. Dev.">
        <title>A novel asparaginase-like protein is a sperm autoantigen in rats.</title>
        <authorList>
            <person name="Bush L.A."/>
            <person name="Herr J.C."/>
            <person name="Wolkowicz M."/>
            <person name="Sherman N.E."/>
            <person name="Shore A."/>
            <person name="Flickinger C.J."/>
        </authorList>
    </citation>
    <scope>NUCLEOTIDE SEQUENCE [MRNA]</scope>
    <scope>IDENTIFICATION BY MASS SPECTROMETRY</scope>
    <scope>TISSUE SPECIFICITY</scope>
    <scope>SUBCELLULAR LOCATION</scope>
    <source>
        <strain>Lewis</strain>
        <tissue>Testis</tissue>
    </source>
</reference>
<reference key="2">
    <citation type="journal article" date="2003" name="J. Neurochem.">
        <title>Gliap -- a novel untypical L-asparaginase localized to rat brain astrocytes.</title>
        <authorList>
            <person name="Dieterich D.C."/>
            <person name="Landwehr M."/>
            <person name="Reissner C."/>
            <person name="Smalla K.-H."/>
            <person name="Richter K."/>
            <person name="Wolf G."/>
            <person name="Boeckers T.M."/>
            <person name="Gundelfinger E.D."/>
            <person name="Kreutz M.R."/>
        </authorList>
    </citation>
    <scope>NUCLEOTIDE SEQUENCE [MRNA]</scope>
    <scope>FUNCTION</scope>
    <scope>CATALYTIC ACTIVITY</scope>
    <scope>BIOPHYSICOCHEMICAL PROPERTIES</scope>
    <scope>TISSUE SPECIFICITY</scope>
    <scope>SUBCELLULAR LOCATION</scope>
    <source>
        <strain>Wistar</strain>
        <tissue>Brain</tissue>
    </source>
</reference>
<keyword id="KW-0068">Autocatalytic cleavage</keyword>
<keyword id="KW-0963">Cytoplasm</keyword>
<keyword id="KW-0378">Hydrolase</keyword>
<keyword id="KW-0645">Protease</keyword>
<keyword id="KW-1185">Reference proteome</keyword>
<accession>Q8VI04</accession>
<accession>Q8CG44</accession>
<protein>
    <recommendedName>
        <fullName>Isoaspartyl peptidase/L-asparaginase</fullName>
        <ecNumber evidence="4">3.4.19.5</ecNumber>
        <ecNumber evidence="4">3.5.1.1</ecNumber>
    </recommendedName>
    <alternativeName>
        <fullName>Asparaginase-like protein 1</fullName>
    </alternativeName>
    <alternativeName>
        <fullName>Asparaginase-like sperm autoantigen</fullName>
    </alternativeName>
    <alternativeName>
        <fullName>Beta-aspartyl-peptidase</fullName>
    </alternativeName>
    <alternativeName>
        <fullName>Glial asparaginase</fullName>
    </alternativeName>
    <alternativeName>
        <fullName>Isoaspartyl dipeptidase</fullName>
    </alternativeName>
    <alternativeName>
        <fullName>L-asparagine amidohydrolase</fullName>
    </alternativeName>
    <component>
        <recommendedName>
            <fullName>Isoaspartyl peptidase/L-asparaginase alpha chain</fullName>
        </recommendedName>
    </component>
    <component>
        <recommendedName>
            <fullName>Isoaspartyl peptidase/L-asparaginase beta chain</fullName>
        </recommendedName>
    </component>
</protein>
<name>ASGL1_RAT</name>